<keyword id="KW-0175">Coiled coil</keyword>
<keyword id="KW-1185">Reference proteome</keyword>
<protein>
    <recommendedName>
        <fullName>WEB family protein At3g13190</fullName>
    </recommendedName>
</protein>
<evidence type="ECO:0000255" key="1"/>
<evidence type="ECO:0000256" key="2">
    <source>
        <dbReference type="SAM" id="MobiDB-lite"/>
    </source>
</evidence>
<evidence type="ECO:0000305" key="3"/>
<organism>
    <name type="scientific">Arabidopsis thaliana</name>
    <name type="common">Mouse-ear cress</name>
    <dbReference type="NCBI Taxonomy" id="3702"/>
    <lineage>
        <taxon>Eukaryota</taxon>
        <taxon>Viridiplantae</taxon>
        <taxon>Streptophyta</taxon>
        <taxon>Embryophyta</taxon>
        <taxon>Tracheophyta</taxon>
        <taxon>Spermatophyta</taxon>
        <taxon>Magnoliopsida</taxon>
        <taxon>eudicotyledons</taxon>
        <taxon>Gunneridae</taxon>
        <taxon>Pentapetalae</taxon>
        <taxon>rosids</taxon>
        <taxon>malvids</taxon>
        <taxon>Brassicales</taxon>
        <taxon>Brassicaceae</taxon>
        <taxon>Camelineae</taxon>
        <taxon>Arabidopsis</taxon>
    </lineage>
</organism>
<comment type="similarity">
    <text evidence="3">Belongs to the WEB family.</text>
</comment>
<gene>
    <name type="ordered locus">At3g13190</name>
    <name type="ORF">MJG19.15</name>
</gene>
<reference key="1">
    <citation type="journal article" date="2000" name="DNA Res.">
        <title>Structural analysis of Arabidopsis thaliana chromosome 3. II. Sequence features of the 4,251,695 bp regions covered by 90 P1, TAC and BAC clones.</title>
        <authorList>
            <person name="Kaneko T."/>
            <person name="Katoh T."/>
            <person name="Sato S."/>
            <person name="Nakamura Y."/>
            <person name="Asamizu E."/>
            <person name="Tabata S."/>
        </authorList>
    </citation>
    <scope>NUCLEOTIDE SEQUENCE [LARGE SCALE GENOMIC DNA]</scope>
    <source>
        <strain>cv. Columbia</strain>
    </source>
</reference>
<reference key="2">
    <citation type="journal article" date="2017" name="Plant J.">
        <title>Araport11: a complete reannotation of the Arabidopsis thaliana reference genome.</title>
        <authorList>
            <person name="Cheng C.Y."/>
            <person name="Krishnakumar V."/>
            <person name="Chan A.P."/>
            <person name="Thibaud-Nissen F."/>
            <person name="Schobel S."/>
            <person name="Town C.D."/>
        </authorList>
    </citation>
    <scope>GENOME REANNOTATION</scope>
    <source>
        <strain>cv. Columbia</strain>
    </source>
</reference>
<reference key="3">
    <citation type="journal article" date="2003" name="Science">
        <title>Empirical analysis of transcriptional activity in the Arabidopsis genome.</title>
        <authorList>
            <person name="Yamada K."/>
            <person name="Lim J."/>
            <person name="Dale J.M."/>
            <person name="Chen H."/>
            <person name="Shinn P."/>
            <person name="Palm C.J."/>
            <person name="Southwick A.M."/>
            <person name="Wu H.C."/>
            <person name="Kim C.J."/>
            <person name="Nguyen M."/>
            <person name="Pham P.K."/>
            <person name="Cheuk R.F."/>
            <person name="Karlin-Newmann G."/>
            <person name="Liu S.X."/>
            <person name="Lam B."/>
            <person name="Sakano H."/>
            <person name="Wu T."/>
            <person name="Yu G."/>
            <person name="Miranda M."/>
            <person name="Quach H.L."/>
            <person name="Tripp M."/>
            <person name="Chang C.H."/>
            <person name="Lee J.M."/>
            <person name="Toriumi M.J."/>
            <person name="Chan M.M."/>
            <person name="Tang C.C."/>
            <person name="Onodera C.S."/>
            <person name="Deng J.M."/>
            <person name="Akiyama K."/>
            <person name="Ansari Y."/>
            <person name="Arakawa T."/>
            <person name="Banh J."/>
            <person name="Banno F."/>
            <person name="Bowser L."/>
            <person name="Brooks S.Y."/>
            <person name="Carninci P."/>
            <person name="Chao Q."/>
            <person name="Choy N."/>
            <person name="Enju A."/>
            <person name="Goldsmith A.D."/>
            <person name="Gurjal M."/>
            <person name="Hansen N.F."/>
            <person name="Hayashizaki Y."/>
            <person name="Johnson-Hopson C."/>
            <person name="Hsuan V.W."/>
            <person name="Iida K."/>
            <person name="Karnes M."/>
            <person name="Khan S."/>
            <person name="Koesema E."/>
            <person name="Ishida J."/>
            <person name="Jiang P.X."/>
            <person name="Jones T."/>
            <person name="Kawai J."/>
            <person name="Kamiya A."/>
            <person name="Meyers C."/>
            <person name="Nakajima M."/>
            <person name="Narusaka M."/>
            <person name="Seki M."/>
            <person name="Sakurai T."/>
            <person name="Satou M."/>
            <person name="Tamse R."/>
            <person name="Vaysberg M."/>
            <person name="Wallender E.K."/>
            <person name="Wong C."/>
            <person name="Yamamura Y."/>
            <person name="Yuan S."/>
            <person name="Shinozaki K."/>
            <person name="Davis R.W."/>
            <person name="Theologis A."/>
            <person name="Ecker J.R."/>
        </authorList>
    </citation>
    <scope>NUCLEOTIDE SEQUENCE [LARGE SCALE MRNA]</scope>
    <source>
        <strain>cv. Columbia</strain>
    </source>
</reference>
<reference key="4">
    <citation type="submission" date="2005-03" db="EMBL/GenBank/DDBJ databases">
        <title>Large-scale analysis of RIKEN Arabidopsis full-length (RAFL) cDNAs.</title>
        <authorList>
            <person name="Totoki Y."/>
            <person name="Seki M."/>
            <person name="Ishida J."/>
            <person name="Nakajima M."/>
            <person name="Enju A."/>
            <person name="Kamiya A."/>
            <person name="Narusaka M."/>
            <person name="Shin-i T."/>
            <person name="Nakagawa M."/>
            <person name="Sakamoto N."/>
            <person name="Oishi K."/>
            <person name="Kohara Y."/>
            <person name="Kobayashi M."/>
            <person name="Toyoda A."/>
            <person name="Sakaki Y."/>
            <person name="Sakurai T."/>
            <person name="Iida K."/>
            <person name="Akiyama K."/>
            <person name="Satou M."/>
            <person name="Toyoda T."/>
            <person name="Konagaya A."/>
            <person name="Carninci P."/>
            <person name="Kawai J."/>
            <person name="Hayashizaki Y."/>
            <person name="Shinozaki K."/>
        </authorList>
    </citation>
    <scope>NUCLEOTIDE SEQUENCE [LARGE SCALE MRNA]</scope>
    <source>
        <strain>cv. Columbia</strain>
    </source>
</reference>
<dbReference type="EMBL" id="AP000375">
    <property type="protein sequence ID" value="BAB01411.1"/>
    <property type="molecule type" value="Genomic_DNA"/>
</dbReference>
<dbReference type="EMBL" id="CP002686">
    <property type="protein sequence ID" value="AEE75307.1"/>
    <property type="molecule type" value="Genomic_DNA"/>
</dbReference>
<dbReference type="EMBL" id="CP002686">
    <property type="protein sequence ID" value="AEE75308.1"/>
    <property type="molecule type" value="Genomic_DNA"/>
</dbReference>
<dbReference type="EMBL" id="CP002686">
    <property type="protein sequence ID" value="AEE75309.1"/>
    <property type="molecule type" value="Genomic_DNA"/>
</dbReference>
<dbReference type="EMBL" id="CP002686">
    <property type="protein sequence ID" value="ANM64861.1"/>
    <property type="molecule type" value="Genomic_DNA"/>
</dbReference>
<dbReference type="EMBL" id="AY136342">
    <property type="protein sequence ID" value="AAM97008.1"/>
    <property type="molecule type" value="mRNA"/>
</dbReference>
<dbReference type="EMBL" id="BT000166">
    <property type="protein sequence ID" value="AAN15485.1"/>
    <property type="molecule type" value="mRNA"/>
</dbReference>
<dbReference type="EMBL" id="AK221650">
    <property type="protein sequence ID" value="BAD95315.1"/>
    <property type="molecule type" value="mRNA"/>
</dbReference>
<dbReference type="RefSeq" id="NP_001078143.1">
    <property type="nucleotide sequence ID" value="NM_001084674.1"/>
</dbReference>
<dbReference type="RefSeq" id="NP_001319537.1">
    <property type="nucleotide sequence ID" value="NM_001338036.1"/>
</dbReference>
<dbReference type="RefSeq" id="NP_187925.1">
    <property type="nucleotide sequence ID" value="NM_112159.3"/>
</dbReference>
<dbReference type="RefSeq" id="NP_974301.1">
    <property type="nucleotide sequence ID" value="NM_202572.2"/>
</dbReference>
<dbReference type="SMR" id="Q9LK53"/>
<dbReference type="FunCoup" id="Q9LK53">
    <property type="interactions" value="101"/>
</dbReference>
<dbReference type="STRING" id="3702.Q9LK53"/>
<dbReference type="iPTMnet" id="Q9LK53"/>
<dbReference type="PaxDb" id="3702-AT3G13190.1"/>
<dbReference type="ProteomicsDB" id="242581"/>
<dbReference type="EnsemblPlants" id="AT3G13190.1">
    <property type="protein sequence ID" value="AT3G13190.1"/>
    <property type="gene ID" value="AT3G13190"/>
</dbReference>
<dbReference type="EnsemblPlants" id="AT3G13190.2">
    <property type="protein sequence ID" value="AT3G13190.2"/>
    <property type="gene ID" value="AT3G13190"/>
</dbReference>
<dbReference type="EnsemblPlants" id="AT3G13190.3">
    <property type="protein sequence ID" value="AT3G13190.3"/>
    <property type="gene ID" value="AT3G13190"/>
</dbReference>
<dbReference type="EnsemblPlants" id="AT3G13190.4">
    <property type="protein sequence ID" value="AT3G13190.4"/>
    <property type="gene ID" value="AT3G13190"/>
</dbReference>
<dbReference type="GeneID" id="820509"/>
<dbReference type="Gramene" id="AT3G13190.1">
    <property type="protein sequence ID" value="AT3G13190.1"/>
    <property type="gene ID" value="AT3G13190"/>
</dbReference>
<dbReference type="Gramene" id="AT3G13190.2">
    <property type="protein sequence ID" value="AT3G13190.2"/>
    <property type="gene ID" value="AT3G13190"/>
</dbReference>
<dbReference type="Gramene" id="AT3G13190.3">
    <property type="protein sequence ID" value="AT3G13190.3"/>
    <property type="gene ID" value="AT3G13190"/>
</dbReference>
<dbReference type="Gramene" id="AT3G13190.4">
    <property type="protein sequence ID" value="AT3G13190.4"/>
    <property type="gene ID" value="AT3G13190"/>
</dbReference>
<dbReference type="KEGG" id="ath:AT3G13190"/>
<dbReference type="Araport" id="AT3G13190"/>
<dbReference type="TAIR" id="AT3G13190"/>
<dbReference type="HOGENOM" id="CLU_861529_0_0_1"/>
<dbReference type="InParanoid" id="Q9LK53"/>
<dbReference type="OMA" id="TFHSVQH"/>
<dbReference type="OrthoDB" id="1111912at2759"/>
<dbReference type="PhylomeDB" id="Q9LK53"/>
<dbReference type="PRO" id="PR:Q9LK53"/>
<dbReference type="Proteomes" id="UP000006548">
    <property type="component" value="Chromosome 3"/>
</dbReference>
<dbReference type="ExpressionAtlas" id="Q9LK53">
    <property type="expression patterns" value="baseline and differential"/>
</dbReference>
<dbReference type="PANTHER" id="PTHR32054">
    <property type="entry name" value="HEAVY CHAIN, PUTATIVE, EXPRESSED-RELATED-RELATED"/>
    <property type="match status" value="1"/>
</dbReference>
<dbReference type="PANTHER" id="PTHR32054:SF50">
    <property type="entry name" value="WEB FAMILY PROTEIN"/>
    <property type="match status" value="1"/>
</dbReference>
<feature type="chain" id="PRO_0000414076" description="WEB family protein At3g13190">
    <location>
        <begin position="1"/>
        <end position="316"/>
    </location>
</feature>
<feature type="region of interest" description="Disordered" evidence="2">
    <location>
        <begin position="295"/>
        <end position="316"/>
    </location>
</feature>
<feature type="coiled-coil region" evidence="1">
    <location>
        <begin position="42"/>
        <end position="90"/>
    </location>
</feature>
<feature type="coiled-coil region" evidence="1">
    <location>
        <begin position="119"/>
        <end position="195"/>
    </location>
</feature>
<feature type="coiled-coil region" evidence="1">
    <location>
        <begin position="233"/>
        <end position="266"/>
    </location>
</feature>
<name>Y3319_ARATH</name>
<proteinExistence type="evidence at transcript level"/>
<sequence>MATFHTVRDAVKLFDAGISGGKHLNKGQEEGVLVEETNLCLWNKEVNKLKEKIKNAVKTKIEALLELEEAKKTVEQLSQELGIKRNMINDEKDLDLSSSVRVVTSELGVAKESIHRVAEEESELCMLMESLKLELQNVEKAHSELKEIEQRERDHQAIEDLKKETKDAKTQLSLLEEELKIAVFEAQEAKDAEEHARERLNVAVLESDFRSLAVVKESAAEELTETEALRACRDETLKTLEMSEREIEDIKAATQDALKKAEMAQEATIVVDVELKRRRKAASRILAESKMCAKSTKEVLKSKPRSSSKEGCLVKC</sequence>
<accession>Q9LK53</accession>